<dbReference type="EC" id="2.7.10.1"/>
<dbReference type="EMBL" id="AC002339">
    <property type="protein sequence ID" value="AAC02766.1"/>
    <property type="molecule type" value="Genomic_DNA"/>
</dbReference>
<dbReference type="EMBL" id="CP002685">
    <property type="protein sequence ID" value="AEC10036.1"/>
    <property type="molecule type" value="Genomic_DNA"/>
</dbReference>
<dbReference type="EMBL" id="FJ708712">
    <property type="protein sequence ID" value="ACN59307.1"/>
    <property type="molecule type" value="mRNA"/>
</dbReference>
<dbReference type="EMBL" id="AK228301">
    <property type="protein sequence ID" value="BAF00244.1"/>
    <property type="molecule type" value="mRNA"/>
</dbReference>
<dbReference type="PIR" id="E84846">
    <property type="entry name" value="E84846"/>
</dbReference>
<dbReference type="RefSeq" id="NP_181713.1">
    <property type="nucleotide sequence ID" value="NM_129746.3"/>
</dbReference>
<dbReference type="SMR" id="O22938"/>
<dbReference type="BioGRID" id="4118">
    <property type="interactions" value="92"/>
</dbReference>
<dbReference type="FunCoup" id="O22938">
    <property type="interactions" value="890"/>
</dbReference>
<dbReference type="IntAct" id="O22938">
    <property type="interactions" value="72"/>
</dbReference>
<dbReference type="STRING" id="3702.O22938"/>
<dbReference type="GlyCosmos" id="O22938">
    <property type="glycosylation" value="14 sites, No reported glycans"/>
</dbReference>
<dbReference type="GlyGen" id="O22938">
    <property type="glycosylation" value="14 sites"/>
</dbReference>
<dbReference type="PaxDb" id="3702-AT2G41820.1"/>
<dbReference type="ProteomicsDB" id="224808"/>
<dbReference type="EnsemblPlants" id="AT2G41820.1">
    <property type="protein sequence ID" value="AT2G41820.1"/>
    <property type="gene ID" value="AT2G41820"/>
</dbReference>
<dbReference type="GeneID" id="818781"/>
<dbReference type="Gramene" id="AT2G41820.1">
    <property type="protein sequence ID" value="AT2G41820.1"/>
    <property type="gene ID" value="AT2G41820"/>
</dbReference>
<dbReference type="KEGG" id="ath:AT2G41820"/>
<dbReference type="Araport" id="AT2G41820"/>
<dbReference type="TAIR" id="AT2G41820">
    <property type="gene designation" value="PXC3"/>
</dbReference>
<dbReference type="eggNOG" id="ENOG502QR50">
    <property type="taxonomic scope" value="Eukaryota"/>
</dbReference>
<dbReference type="HOGENOM" id="CLU_000288_22_1_1"/>
<dbReference type="InParanoid" id="O22938"/>
<dbReference type="OMA" id="WVHTAPA"/>
<dbReference type="PhylomeDB" id="O22938"/>
<dbReference type="PRO" id="PR:O22938"/>
<dbReference type="Proteomes" id="UP000006548">
    <property type="component" value="Chromosome 2"/>
</dbReference>
<dbReference type="ExpressionAtlas" id="O22938">
    <property type="expression patterns" value="baseline and differential"/>
</dbReference>
<dbReference type="GO" id="GO:0005886">
    <property type="term" value="C:plasma membrane"/>
    <property type="evidence" value="ECO:0007669"/>
    <property type="project" value="UniProtKB-SubCell"/>
</dbReference>
<dbReference type="GO" id="GO:0005524">
    <property type="term" value="F:ATP binding"/>
    <property type="evidence" value="ECO:0007669"/>
    <property type="project" value="UniProtKB-KW"/>
</dbReference>
<dbReference type="GO" id="GO:0004714">
    <property type="term" value="F:transmembrane receptor protein tyrosine kinase activity"/>
    <property type="evidence" value="ECO:0007669"/>
    <property type="project" value="UniProtKB-EC"/>
</dbReference>
<dbReference type="CDD" id="cd14066">
    <property type="entry name" value="STKc_IRAK"/>
    <property type="match status" value="1"/>
</dbReference>
<dbReference type="FunFam" id="1.10.510.10:FF:000388">
    <property type="entry name" value="Leucine-rich repeat receptor-like tyrosine-protein kinase PXC3"/>
    <property type="match status" value="1"/>
</dbReference>
<dbReference type="FunFam" id="3.30.200.20:FF:000454">
    <property type="entry name" value="Leucine-rich repeat receptor-like tyrosine-protein kinase PXC3"/>
    <property type="match status" value="1"/>
</dbReference>
<dbReference type="FunFam" id="3.80.10.10:FF:000095">
    <property type="entry name" value="LRR receptor-like serine/threonine-protein kinase GSO1"/>
    <property type="match status" value="2"/>
</dbReference>
<dbReference type="Gene3D" id="3.30.200.20">
    <property type="entry name" value="Phosphorylase Kinase, domain 1"/>
    <property type="match status" value="1"/>
</dbReference>
<dbReference type="Gene3D" id="3.80.10.10">
    <property type="entry name" value="Ribonuclease Inhibitor"/>
    <property type="match status" value="3"/>
</dbReference>
<dbReference type="Gene3D" id="1.10.510.10">
    <property type="entry name" value="Transferase(Phosphotransferase) domain 1"/>
    <property type="match status" value="1"/>
</dbReference>
<dbReference type="InterPro" id="IPR011009">
    <property type="entry name" value="Kinase-like_dom_sf"/>
</dbReference>
<dbReference type="InterPro" id="IPR001611">
    <property type="entry name" value="Leu-rich_rpt"/>
</dbReference>
<dbReference type="InterPro" id="IPR003591">
    <property type="entry name" value="Leu-rich_rpt_typical-subtyp"/>
</dbReference>
<dbReference type="InterPro" id="IPR032675">
    <property type="entry name" value="LRR_dom_sf"/>
</dbReference>
<dbReference type="InterPro" id="IPR050647">
    <property type="entry name" value="Plant_LRR-RLKs"/>
</dbReference>
<dbReference type="InterPro" id="IPR000719">
    <property type="entry name" value="Prot_kinase_dom"/>
</dbReference>
<dbReference type="InterPro" id="IPR001245">
    <property type="entry name" value="Ser-Thr/Tyr_kinase_cat_dom"/>
</dbReference>
<dbReference type="InterPro" id="IPR008266">
    <property type="entry name" value="Tyr_kinase_AS"/>
</dbReference>
<dbReference type="PANTHER" id="PTHR48056:SF40">
    <property type="entry name" value="LEUCINE-RICH REPEAT RECEPTOR-LIKE TYROSINE-PROTEIN KINASE PXC3"/>
    <property type="match status" value="1"/>
</dbReference>
<dbReference type="PANTHER" id="PTHR48056">
    <property type="entry name" value="LRR RECEPTOR-LIKE SERINE/THREONINE-PROTEIN KINASE-RELATED"/>
    <property type="match status" value="1"/>
</dbReference>
<dbReference type="Pfam" id="PF00560">
    <property type="entry name" value="LRR_1"/>
    <property type="match status" value="3"/>
</dbReference>
<dbReference type="Pfam" id="PF13855">
    <property type="entry name" value="LRR_8"/>
    <property type="match status" value="2"/>
</dbReference>
<dbReference type="Pfam" id="PF07714">
    <property type="entry name" value="PK_Tyr_Ser-Thr"/>
    <property type="match status" value="1"/>
</dbReference>
<dbReference type="SMART" id="SM00369">
    <property type="entry name" value="LRR_TYP"/>
    <property type="match status" value="7"/>
</dbReference>
<dbReference type="SUPFAM" id="SSF52058">
    <property type="entry name" value="L domain-like"/>
    <property type="match status" value="2"/>
</dbReference>
<dbReference type="SUPFAM" id="SSF56112">
    <property type="entry name" value="Protein kinase-like (PK-like)"/>
    <property type="match status" value="1"/>
</dbReference>
<dbReference type="PROSITE" id="PS50011">
    <property type="entry name" value="PROTEIN_KINASE_DOM"/>
    <property type="match status" value="1"/>
</dbReference>
<dbReference type="PROSITE" id="PS00109">
    <property type="entry name" value="PROTEIN_KINASE_TYR"/>
    <property type="match status" value="1"/>
</dbReference>
<reference key="1">
    <citation type="journal article" date="1999" name="Nature">
        <title>Sequence and analysis of chromosome 2 of the plant Arabidopsis thaliana.</title>
        <authorList>
            <person name="Lin X."/>
            <person name="Kaul S."/>
            <person name="Rounsley S.D."/>
            <person name="Shea T.P."/>
            <person name="Benito M.-I."/>
            <person name="Town C.D."/>
            <person name="Fujii C.Y."/>
            <person name="Mason T.M."/>
            <person name="Bowman C.L."/>
            <person name="Barnstead M.E."/>
            <person name="Feldblyum T.V."/>
            <person name="Buell C.R."/>
            <person name="Ketchum K.A."/>
            <person name="Lee J.J."/>
            <person name="Ronning C.M."/>
            <person name="Koo H.L."/>
            <person name="Moffat K.S."/>
            <person name="Cronin L.A."/>
            <person name="Shen M."/>
            <person name="Pai G."/>
            <person name="Van Aken S."/>
            <person name="Umayam L."/>
            <person name="Tallon L.J."/>
            <person name="Gill J.E."/>
            <person name="Adams M.D."/>
            <person name="Carrera A.J."/>
            <person name="Creasy T.H."/>
            <person name="Goodman H.M."/>
            <person name="Somerville C.R."/>
            <person name="Copenhaver G.P."/>
            <person name="Preuss D."/>
            <person name="Nierman W.C."/>
            <person name="White O."/>
            <person name="Eisen J.A."/>
            <person name="Salzberg S.L."/>
            <person name="Fraser C.M."/>
            <person name="Venter J.C."/>
        </authorList>
    </citation>
    <scope>NUCLEOTIDE SEQUENCE [LARGE SCALE GENOMIC DNA]</scope>
    <source>
        <strain>cv. Columbia</strain>
    </source>
</reference>
<reference key="2">
    <citation type="journal article" date="2017" name="Plant J.">
        <title>Araport11: a complete reannotation of the Arabidopsis thaliana reference genome.</title>
        <authorList>
            <person name="Cheng C.Y."/>
            <person name="Krishnakumar V."/>
            <person name="Chan A.P."/>
            <person name="Thibaud-Nissen F."/>
            <person name="Schobel S."/>
            <person name="Town C.D."/>
        </authorList>
    </citation>
    <scope>GENOME REANNOTATION</scope>
    <source>
        <strain>cv. Columbia</strain>
    </source>
</reference>
<reference key="3">
    <citation type="journal article" date="2010" name="BMC Genomics">
        <title>Genome-wide cloning and sequence analysis of leucine-rich repeat receptor-like protein kinase genes in Arabidopsis thaliana.</title>
        <authorList>
            <person name="Gou X."/>
            <person name="He K."/>
            <person name="Yang H."/>
            <person name="Yuan T."/>
            <person name="Lin H."/>
            <person name="Clouse S.D."/>
            <person name="Li J."/>
        </authorList>
    </citation>
    <scope>NUCLEOTIDE SEQUENCE [LARGE SCALE MRNA]</scope>
    <source>
        <strain>cv. Columbia</strain>
    </source>
</reference>
<reference key="4">
    <citation type="submission" date="2006-07" db="EMBL/GenBank/DDBJ databases">
        <title>Large-scale analysis of RIKEN Arabidopsis full-length (RAFL) cDNAs.</title>
        <authorList>
            <person name="Totoki Y."/>
            <person name="Seki M."/>
            <person name="Ishida J."/>
            <person name="Nakajima M."/>
            <person name="Enju A."/>
            <person name="Kamiya A."/>
            <person name="Narusaka M."/>
            <person name="Shin-i T."/>
            <person name="Nakagawa M."/>
            <person name="Sakamoto N."/>
            <person name="Oishi K."/>
            <person name="Kohara Y."/>
            <person name="Kobayashi M."/>
            <person name="Toyoda A."/>
            <person name="Sakaki Y."/>
            <person name="Sakurai T."/>
            <person name="Iida K."/>
            <person name="Akiyama K."/>
            <person name="Satou M."/>
            <person name="Toyoda T."/>
            <person name="Konagaya A."/>
            <person name="Carninci P."/>
            <person name="Kawai J."/>
            <person name="Hayashizaki Y."/>
            <person name="Shinozaki K."/>
        </authorList>
    </citation>
    <scope>NUCLEOTIDE SEQUENCE [LARGE SCALE MRNA]</scope>
    <source>
        <strain>cv. Columbia</strain>
    </source>
</reference>
<reference key="5">
    <citation type="journal article" date="2013" name="BMC Plant Biol.">
        <title>The Arabidopsis LRR-RLK, PXC1, is a regulator of secondary wall formation correlated with the TDIF-PXY/TDR-WOX4 signaling pathway.</title>
        <authorList>
            <person name="Wang J."/>
            <person name="Kucukoglu M."/>
            <person name="Zhang L."/>
            <person name="Chen P."/>
            <person name="Decker D."/>
            <person name="Nilsson O."/>
            <person name="Jones B."/>
            <person name="Sandberg G."/>
            <person name="Zheng B."/>
        </authorList>
    </citation>
    <scope>TISSUE SPECIFICITY</scope>
</reference>
<protein>
    <recommendedName>
        <fullName evidence="8">Leucine-rich repeat receptor-like tyrosine-protein kinase PXC3</fullName>
        <ecNumber>2.7.10.1</ecNumber>
    </recommendedName>
    <alternativeName>
        <fullName evidence="7">Protein PXY/TDR-CORRELATED 3</fullName>
    </alternativeName>
</protein>
<comment type="function">
    <text evidence="2">Leucine-rich repeat receptor-like protein kinase that may play a role in vascular tissues development.</text>
</comment>
<comment type="catalytic activity">
    <reaction evidence="5">
        <text>L-tyrosyl-[protein] + ATP = O-phospho-L-tyrosyl-[protein] + ADP + H(+)</text>
        <dbReference type="Rhea" id="RHEA:10596"/>
        <dbReference type="Rhea" id="RHEA-COMP:10136"/>
        <dbReference type="Rhea" id="RHEA-COMP:20101"/>
        <dbReference type="ChEBI" id="CHEBI:15378"/>
        <dbReference type="ChEBI" id="CHEBI:30616"/>
        <dbReference type="ChEBI" id="CHEBI:46858"/>
        <dbReference type="ChEBI" id="CHEBI:61978"/>
        <dbReference type="ChEBI" id="CHEBI:456216"/>
        <dbReference type="EC" id="2.7.10.1"/>
    </reaction>
</comment>
<comment type="subcellular location">
    <subcellularLocation>
        <location evidence="1">Cell membrane</location>
        <topology evidence="1">Single-pass type I membrane protein</topology>
    </subcellularLocation>
</comment>
<comment type="tissue specificity">
    <text evidence="6">Expressed in the vascular strands of cotyledons, the shoot apex, hypocotyls, roots, leaves, stems and flowers.</text>
</comment>
<comment type="similarity">
    <text evidence="4">Belongs to the protein kinase superfamily. Tyr protein kinase family.</text>
</comment>
<comment type="online information" name="Arabidopsis protein tyrosine kinases">
    <link uri="http://www.bio.unipd.it/molbinfo/PTKtable.html"/>
</comment>
<evidence type="ECO:0000250" key="1"/>
<evidence type="ECO:0000250" key="2">
    <source>
        <dbReference type="UniProtKB" id="Q9SJQ1"/>
    </source>
</evidence>
<evidence type="ECO:0000255" key="3"/>
<evidence type="ECO:0000255" key="4">
    <source>
        <dbReference type="PROSITE-ProRule" id="PRU00159"/>
    </source>
</evidence>
<evidence type="ECO:0000255" key="5">
    <source>
        <dbReference type="PROSITE-ProRule" id="PRU10028"/>
    </source>
</evidence>
<evidence type="ECO:0000269" key="6">
    <source>
    </source>
</evidence>
<evidence type="ECO:0000303" key="7">
    <source>
    </source>
</evidence>
<evidence type="ECO:0000305" key="8"/>
<feature type="signal peptide" evidence="3">
    <location>
        <begin position="1"/>
        <end position="23"/>
    </location>
</feature>
<feature type="chain" id="PRO_0000403325" description="Leucine-rich repeat receptor-like tyrosine-protein kinase PXC3">
    <location>
        <begin position="24"/>
        <end position="890"/>
    </location>
</feature>
<feature type="topological domain" description="Extracellular" evidence="3">
    <location>
        <begin position="24"/>
        <end position="534"/>
    </location>
</feature>
<feature type="transmembrane region" description="Helical" evidence="3">
    <location>
        <begin position="535"/>
        <end position="555"/>
    </location>
</feature>
<feature type="topological domain" description="Cytoplasmic" evidence="3">
    <location>
        <begin position="556"/>
        <end position="890"/>
    </location>
</feature>
<feature type="repeat" description="LRR 1">
    <location>
        <begin position="67"/>
        <end position="85"/>
    </location>
</feature>
<feature type="repeat" description="LRR 2">
    <location>
        <begin position="86"/>
        <end position="108"/>
    </location>
</feature>
<feature type="repeat" description="LRR 3">
    <location>
        <begin position="110"/>
        <end position="132"/>
    </location>
</feature>
<feature type="repeat" description="LRR 4">
    <location>
        <begin position="133"/>
        <end position="157"/>
    </location>
</feature>
<feature type="repeat" description="LRR 5">
    <location>
        <begin position="159"/>
        <end position="181"/>
    </location>
</feature>
<feature type="repeat" description="LRR 6">
    <location>
        <begin position="182"/>
        <end position="205"/>
    </location>
</feature>
<feature type="repeat" description="LRR 7">
    <location>
        <begin position="206"/>
        <end position="229"/>
    </location>
</feature>
<feature type="repeat" description="LRR 8">
    <location>
        <begin position="231"/>
        <end position="254"/>
    </location>
</feature>
<feature type="repeat" description="LRR 9">
    <location>
        <begin position="256"/>
        <end position="276"/>
    </location>
</feature>
<feature type="repeat" description="LRR 10">
    <location>
        <begin position="278"/>
        <end position="300"/>
    </location>
</feature>
<feature type="repeat" description="LRR 11">
    <location>
        <begin position="301"/>
        <end position="325"/>
    </location>
</feature>
<feature type="repeat" description="LRR 12">
    <location>
        <begin position="326"/>
        <end position="349"/>
    </location>
</feature>
<feature type="repeat" description="LRR 13">
    <location>
        <begin position="350"/>
        <end position="373"/>
    </location>
</feature>
<feature type="repeat" description="LRR 14">
    <location>
        <begin position="375"/>
        <end position="397"/>
    </location>
</feature>
<feature type="repeat" description="LRR 15">
    <location>
        <begin position="399"/>
        <end position="421"/>
    </location>
</feature>
<feature type="repeat" description="LRR 16">
    <location>
        <begin position="422"/>
        <end position="446"/>
    </location>
</feature>
<feature type="repeat" description="LRR 17">
    <location>
        <begin position="447"/>
        <end position="469"/>
    </location>
</feature>
<feature type="repeat" description="LRR 18">
    <location>
        <begin position="471"/>
        <end position="492"/>
    </location>
</feature>
<feature type="domain" description="Protein kinase" evidence="4">
    <location>
        <begin position="608"/>
        <end position="886"/>
    </location>
</feature>
<feature type="active site" description="Proton acceptor" evidence="4 5">
    <location>
        <position position="735"/>
    </location>
</feature>
<feature type="binding site" evidence="4">
    <location>
        <begin position="614"/>
        <end position="622"/>
    </location>
    <ligand>
        <name>ATP</name>
        <dbReference type="ChEBI" id="CHEBI:30616"/>
    </ligand>
</feature>
<feature type="binding site" evidence="4">
    <location>
        <position position="636"/>
    </location>
    <ligand>
        <name>ATP</name>
        <dbReference type="ChEBI" id="CHEBI:30616"/>
    </ligand>
</feature>
<feature type="glycosylation site" description="N-linked (GlcNAc...) asparagine" evidence="3">
    <location>
        <position position="46"/>
    </location>
</feature>
<feature type="glycosylation site" description="N-linked (GlcNAc...) asparagine" evidence="3">
    <location>
        <position position="61"/>
    </location>
</feature>
<feature type="glycosylation site" description="N-linked (GlcNAc...) asparagine" evidence="3">
    <location>
        <position position="78"/>
    </location>
</feature>
<feature type="glycosylation site" description="N-linked (GlcNAc...) asparagine" evidence="3">
    <location>
        <position position="108"/>
    </location>
</feature>
<feature type="glycosylation site" description="N-linked (GlcNAc...) asparagine" evidence="3">
    <location>
        <position position="140"/>
    </location>
</feature>
<feature type="glycosylation site" description="N-linked (GlcNAc...) asparagine" evidence="3">
    <location>
        <position position="171"/>
    </location>
</feature>
<feature type="glycosylation site" description="N-linked (GlcNAc...) asparagine" evidence="3">
    <location>
        <position position="180"/>
    </location>
</feature>
<feature type="glycosylation site" description="N-linked (GlcNAc...) asparagine" evidence="3">
    <location>
        <position position="276"/>
    </location>
</feature>
<feature type="glycosylation site" description="N-linked (GlcNAc...) asparagine" evidence="3">
    <location>
        <position position="289"/>
    </location>
</feature>
<feature type="glycosylation site" description="N-linked (GlcNAc...) asparagine" evidence="3">
    <location>
        <position position="303"/>
    </location>
</feature>
<feature type="glycosylation site" description="N-linked (GlcNAc...) asparagine" evidence="3">
    <location>
        <position position="363"/>
    </location>
</feature>
<feature type="glycosylation site" description="N-linked (GlcNAc...) asparagine" evidence="3">
    <location>
        <position position="429"/>
    </location>
</feature>
<feature type="glycosylation site" description="N-linked (GlcNAc...) asparagine" evidence="3">
    <location>
        <position position="477"/>
    </location>
</feature>
<feature type="glycosylation site" description="N-linked (GlcNAc...) asparagine" evidence="3">
    <location>
        <position position="498"/>
    </location>
</feature>
<feature type="sequence conflict" description="In Ref. 4; BAF00244." evidence="8" ref="4">
    <original>N</original>
    <variation>S</variation>
    <location>
        <position position="240"/>
    </location>
</feature>
<feature type="sequence conflict" description="In Ref. 4; BAF00244." evidence="8" ref="4">
    <original>E</original>
    <variation>G</variation>
    <location>
        <position position="818"/>
    </location>
</feature>
<accession>O22938</accession>
<accession>Q0WRK5</accession>
<gene>
    <name evidence="7" type="primary">PXC3</name>
    <name type="ordered locus">At2g41820</name>
    <name type="ORF">T11A7.8</name>
</gene>
<name>PXC3_ARATH</name>
<proteinExistence type="evidence at transcript level"/>
<organism>
    <name type="scientific">Arabidopsis thaliana</name>
    <name type="common">Mouse-ear cress</name>
    <dbReference type="NCBI Taxonomy" id="3702"/>
    <lineage>
        <taxon>Eukaryota</taxon>
        <taxon>Viridiplantae</taxon>
        <taxon>Streptophyta</taxon>
        <taxon>Embryophyta</taxon>
        <taxon>Tracheophyta</taxon>
        <taxon>Spermatophyta</taxon>
        <taxon>Magnoliopsida</taxon>
        <taxon>eudicotyledons</taxon>
        <taxon>Gunneridae</taxon>
        <taxon>Pentapetalae</taxon>
        <taxon>rosids</taxon>
        <taxon>malvids</taxon>
        <taxon>Brassicales</taxon>
        <taxon>Brassicaceae</taxon>
        <taxon>Camelineae</taxon>
        <taxon>Arabidopsis</taxon>
    </lineage>
</organism>
<sequence>MTFWCMSILLIVGFLSKSELCEAQLSDEATLVAINRELGVPGWSSNGTDYCTWVGLKCGVNNSFVEMLDLSGLQLRGNVTLISDLRSLKHLDLSGNNFNGRIPTSFGNLSELEFLDLSLNRFVGAIPVEFGKLRGLRAFNISNNLLVGEIPDELKVLERLEEFQVSGNGLNGSIPHWVGNLSSLRVFTAYENDLVGEIPNGLGLVSELELLNLHSNQLEGKIPKGIFEKGKLKVLVLTQNRLTGELPEAVGICSGLSSIRIGNNELVGVIPRTIGNISGLTYFEADKNNLSGEIVAEFSKCSNLTLLNLAANGFAGTIPTELGQLINLQELILSGNSLFGEIPKSFLGSGNLNKLDLSNNRLNGTIPKELCSMPRLQYLLLDQNSIRGDIPHEIGNCVKLLQLQLGRNYLTGTIPPEIGRMRNLQIALNLSFNHLHGSLPPELGKLDKLVSLDVSNNLLTGSIPPLLKGMMSLIEVNFSNNLLNGPVPVFVPFQKSPNSSFLGNKELCGAPLSSSCGYSEDLDHLRYNHRVSYRIVLAVIGSGVAVFVSVTVVVLLFMMREKQEKAAAKNVDVEENVEDEQPAIIAGNVFLENLKQGIDLDAVVKATMKESNKLSTGTFSSVYKAVMPSGMIVSVKKLKSMDRAISHHQNKMIRELERLSKLCHDHLVRPIGFVIYEDVALLLHQHLPNGNLTQLIHESTKKPEYQPDWPMRLSIAVGAAEGLAFLHQVAIIHLDVSSSNVLLDSGYKAVLGEIEISKLLDPSRGTASISSVAGSFGYIPPEYAYTMQVTAPGNVYSYGVVLLEILTSRAPVEEEFGEGVDLVKWVHGASARGETPEQILDAKLSTVSFAWRREMLAALKVALLCTDITPAKRPKMKKVVEMLQEVKQIK</sequence>
<keyword id="KW-0067">ATP-binding</keyword>
<keyword id="KW-1003">Cell membrane</keyword>
<keyword id="KW-0325">Glycoprotein</keyword>
<keyword id="KW-0418">Kinase</keyword>
<keyword id="KW-0433">Leucine-rich repeat</keyword>
<keyword id="KW-0472">Membrane</keyword>
<keyword id="KW-0547">Nucleotide-binding</keyword>
<keyword id="KW-0675">Receptor</keyword>
<keyword id="KW-1185">Reference proteome</keyword>
<keyword id="KW-0677">Repeat</keyword>
<keyword id="KW-0732">Signal</keyword>
<keyword id="KW-0808">Transferase</keyword>
<keyword id="KW-0812">Transmembrane</keyword>
<keyword id="KW-1133">Transmembrane helix</keyword>
<keyword id="KW-0829">Tyrosine-protein kinase</keyword>